<sequence length="431" mass="49629">MLERLSWKRLVLELLLCCLPAFILGAFFGYLPWFLLASVTGLLIWHFWNLLRLSWWLWVDRSMTPPPGRGSWEPLLYGLHQMQLRNKKRRRELGNLIKRFRSGAESLPDAVVLTTEEGGIFWCNGLAQQILGLRWPEDNGQNILNLLRYPEFTQYLKTRDFSRPLNLVLNTGRHLEIRVMPYTHKQLLMVARDVTQMHQLEGARRNFFANVSHELRTPLTVLQGYLEMMNEQPLEGAVREKALHTMREQTQRMEGLVKQLLTLSKIEAAPTHLLNEKVDVPMMLRVVEREAQTLSQKKQTFTFEIDNGLKVSGNEDQLRSAISNLVYNAVNHTPEGTHITVRWQRVPHGAEFSVEDNGPGIAPEHIPRLTERFYRVDKARSRQTGGSGLGLAIVKHAVNHHESRLNIESTVGKGTRFSFVIPERLIAKNSD</sequence>
<proteinExistence type="evidence at protein level"/>
<comment type="function">
    <text>Member of the two-component regulatory system PhoR/PhoB involved in the phosphate regulon genes expression. PhoR may function as a membrane-associated protein kinase that phosphorylates PhoB in response to environmental signals.</text>
</comment>
<comment type="catalytic activity">
    <reaction>
        <text>ATP + protein L-histidine = ADP + protein N-phospho-L-histidine.</text>
        <dbReference type="EC" id="2.7.13.3"/>
    </reaction>
</comment>
<comment type="subcellular location">
    <subcellularLocation>
        <location evidence="3">Cell inner membrane</location>
        <topology evidence="3">Multi-pass membrane protein</topology>
    </subcellularLocation>
</comment>
<keyword id="KW-0067">ATP-binding</keyword>
<keyword id="KW-0997">Cell inner membrane</keyword>
<keyword id="KW-1003">Cell membrane</keyword>
<keyword id="KW-0418">Kinase</keyword>
<keyword id="KW-0472">Membrane</keyword>
<keyword id="KW-0547">Nucleotide-binding</keyword>
<keyword id="KW-0592">Phosphate transport</keyword>
<keyword id="KW-0597">Phosphoprotein</keyword>
<keyword id="KW-1185">Reference proteome</keyword>
<keyword id="KW-0808">Transferase</keyword>
<keyword id="KW-0812">Transmembrane</keyword>
<keyword id="KW-1133">Transmembrane helix</keyword>
<keyword id="KW-0813">Transport</keyword>
<keyword id="KW-0902">Two-component regulatory system</keyword>
<accession>P08400</accession>
<accession>Q2MC26</accession>
<name>PHOR_ECOLI</name>
<gene>
    <name type="primary">phoR</name>
    <name type="synonym">nmpB</name>
    <name type="ordered locus">b0400</name>
    <name type="ordered locus">JW0390</name>
</gene>
<evidence type="ECO:0000255" key="1">
    <source>
        <dbReference type="PROSITE-ProRule" id="PRU00107"/>
    </source>
</evidence>
<evidence type="ECO:0000255" key="2">
    <source>
        <dbReference type="PROSITE-ProRule" id="PRU00140"/>
    </source>
</evidence>
<evidence type="ECO:0000269" key="3">
    <source>
    </source>
</evidence>
<evidence type="ECO:0000305" key="4"/>
<feature type="chain" id="PRO_0000074846" description="Phosphate regulon sensor protein PhoR">
    <location>
        <begin position="1"/>
        <end position="431"/>
    </location>
</feature>
<feature type="topological domain" description="Cytoplasmic" evidence="4">
    <location>
        <begin position="1"/>
        <end position="9"/>
    </location>
</feature>
<feature type="transmembrane region" description="Helical" evidence="4">
    <location>
        <begin position="10"/>
        <end position="28"/>
    </location>
</feature>
<feature type="topological domain" description="Periplasmic" evidence="4">
    <location>
        <begin position="29"/>
        <end position="32"/>
    </location>
</feature>
<feature type="transmembrane region" description="Helical" evidence="4">
    <location>
        <begin position="33"/>
        <end position="51"/>
    </location>
</feature>
<feature type="topological domain" description="Cytoplasmic" evidence="4">
    <location>
        <begin position="52"/>
        <end position="431"/>
    </location>
</feature>
<feature type="domain" description="PAS" evidence="2">
    <location>
        <begin position="96"/>
        <end position="172"/>
    </location>
</feature>
<feature type="domain" description="Histidine kinase" evidence="1">
    <location>
        <begin position="210"/>
        <end position="425"/>
    </location>
</feature>
<feature type="modified residue" description="Phosphohistidine; by autocatalysis" evidence="1">
    <location>
        <position position="213"/>
    </location>
</feature>
<protein>
    <recommendedName>
        <fullName>Phosphate regulon sensor protein PhoR</fullName>
        <ecNumber>2.7.13.3</ecNumber>
    </recommendedName>
</protein>
<reference key="1">
    <citation type="journal article" date="1986" name="J. Mol. Biol.">
        <title>Nucleotide sequence of the phoR gene, a regulatory gene for the phosphate regulon of Escherichia coli.</title>
        <authorList>
            <person name="Makino K."/>
            <person name="Shinagawa H."/>
            <person name="Amemura M."/>
            <person name="Nakata A."/>
        </authorList>
    </citation>
    <scope>NUCLEOTIDE SEQUENCE [GENOMIC DNA]</scope>
    <source>
        <strain>K12</strain>
    </source>
</reference>
<reference key="2">
    <citation type="submission" date="1997-01" db="EMBL/GenBank/DDBJ databases">
        <title>Sequence of minutes 4-25 of Escherichia coli.</title>
        <authorList>
            <person name="Chung E."/>
            <person name="Allen E."/>
            <person name="Araujo R."/>
            <person name="Aparicio A.M."/>
            <person name="Davis K."/>
            <person name="Duncan M."/>
            <person name="Federspiel N."/>
            <person name="Hyman R."/>
            <person name="Kalman S."/>
            <person name="Komp C."/>
            <person name="Kurdi O."/>
            <person name="Lew H."/>
            <person name="Lin D."/>
            <person name="Namath A."/>
            <person name="Oefner P."/>
            <person name="Roberts D."/>
            <person name="Schramm S."/>
            <person name="Davis R.W."/>
        </authorList>
    </citation>
    <scope>NUCLEOTIDE SEQUENCE [LARGE SCALE GENOMIC DNA]</scope>
    <source>
        <strain>K12 / MG1655 / ATCC 47076</strain>
    </source>
</reference>
<reference key="3">
    <citation type="journal article" date="1997" name="Science">
        <title>The complete genome sequence of Escherichia coli K-12.</title>
        <authorList>
            <person name="Blattner F.R."/>
            <person name="Plunkett G. III"/>
            <person name="Bloch C.A."/>
            <person name="Perna N.T."/>
            <person name="Burland V."/>
            <person name="Riley M."/>
            <person name="Collado-Vides J."/>
            <person name="Glasner J.D."/>
            <person name="Rode C.K."/>
            <person name="Mayhew G.F."/>
            <person name="Gregor J."/>
            <person name="Davis N.W."/>
            <person name="Kirkpatrick H.A."/>
            <person name="Goeden M.A."/>
            <person name="Rose D.J."/>
            <person name="Mau B."/>
            <person name="Shao Y."/>
        </authorList>
    </citation>
    <scope>NUCLEOTIDE SEQUENCE [LARGE SCALE GENOMIC DNA]</scope>
    <source>
        <strain>K12 / MG1655 / ATCC 47076</strain>
    </source>
</reference>
<reference key="4">
    <citation type="journal article" date="2006" name="Mol. Syst. Biol.">
        <title>Highly accurate genome sequences of Escherichia coli K-12 strains MG1655 and W3110.</title>
        <authorList>
            <person name="Hayashi K."/>
            <person name="Morooka N."/>
            <person name="Yamamoto Y."/>
            <person name="Fujita K."/>
            <person name="Isono K."/>
            <person name="Choi S."/>
            <person name="Ohtsubo E."/>
            <person name="Baba T."/>
            <person name="Wanner B.L."/>
            <person name="Mori H."/>
            <person name="Horiuchi T."/>
        </authorList>
    </citation>
    <scope>NUCLEOTIDE SEQUENCE [LARGE SCALE GENOMIC DNA]</scope>
    <source>
        <strain>K12 / W3110 / ATCC 27325 / DSM 5911</strain>
    </source>
</reference>
<reference key="5">
    <citation type="journal article" date="1990" name="Mol. Gen. Genet.">
        <title>Regulation of the phosphate regulon of Escherichia coli: properties of phoR deletion mutants and subcellular localization of PhoR protein.</title>
        <authorList>
            <person name="Yamada M."/>
            <person name="Makino K."/>
            <person name="Shinagawa H."/>
            <person name="Nakata A."/>
        </authorList>
    </citation>
    <scope>SUBCELLULAR LOCATION</scope>
</reference>
<reference key="6">
    <citation type="journal article" date="1993" name="Mol. Microbiol.">
        <title>Topology of the PhoR protein of Escherichia coli and functional analysis of internal deletion mutants.</title>
        <authorList>
            <person name="Scholten M."/>
            <person name="Tomassen J."/>
        </authorList>
    </citation>
    <scope>TOPOLOGY</scope>
</reference>
<reference key="7">
    <citation type="journal article" date="2005" name="Science">
        <title>Global topology analysis of the Escherichia coli inner membrane proteome.</title>
        <authorList>
            <person name="Daley D.O."/>
            <person name="Rapp M."/>
            <person name="Granseth E."/>
            <person name="Melen K."/>
            <person name="Drew D."/>
            <person name="von Heijne G."/>
        </authorList>
    </citation>
    <scope>TOPOLOGY [LARGE SCALE ANALYSIS]</scope>
    <source>
        <strain>K12 / MG1655 / ATCC 47076</strain>
    </source>
</reference>
<dbReference type="EC" id="2.7.13.3"/>
<dbReference type="EMBL" id="X04704">
    <property type="protein sequence ID" value="CAA28409.1"/>
    <property type="molecule type" value="Genomic_DNA"/>
</dbReference>
<dbReference type="EMBL" id="U73857">
    <property type="protein sequence ID" value="AAB18124.1"/>
    <property type="molecule type" value="Genomic_DNA"/>
</dbReference>
<dbReference type="EMBL" id="U00096">
    <property type="protein sequence ID" value="AAC73503.1"/>
    <property type="molecule type" value="Genomic_DNA"/>
</dbReference>
<dbReference type="EMBL" id="AP009048">
    <property type="protein sequence ID" value="BAE76180.1"/>
    <property type="molecule type" value="Genomic_DNA"/>
</dbReference>
<dbReference type="PIR" id="A25557">
    <property type="entry name" value="RGECFR"/>
</dbReference>
<dbReference type="RefSeq" id="NP_414934.1">
    <property type="nucleotide sequence ID" value="NC_000913.3"/>
</dbReference>
<dbReference type="RefSeq" id="WP_000893623.1">
    <property type="nucleotide sequence ID" value="NZ_SSZK01000009.1"/>
</dbReference>
<dbReference type="SMR" id="P08400"/>
<dbReference type="BioGRID" id="4262091">
    <property type="interactions" value="112"/>
</dbReference>
<dbReference type="DIP" id="DIP-10502N"/>
<dbReference type="FunCoup" id="P08400">
    <property type="interactions" value="888"/>
</dbReference>
<dbReference type="IntAct" id="P08400">
    <property type="interactions" value="5"/>
</dbReference>
<dbReference type="STRING" id="511145.b0400"/>
<dbReference type="BindingDB" id="P08400"/>
<dbReference type="ChEMBL" id="CHEMBL4295567"/>
<dbReference type="jPOST" id="P08400"/>
<dbReference type="PaxDb" id="511145-b0400"/>
<dbReference type="EnsemblBacteria" id="AAC73503">
    <property type="protein sequence ID" value="AAC73503"/>
    <property type="gene ID" value="b0400"/>
</dbReference>
<dbReference type="GeneID" id="945044"/>
<dbReference type="KEGG" id="ecj:JW0390"/>
<dbReference type="KEGG" id="eco:b0400"/>
<dbReference type="KEGG" id="ecoc:C3026_01945"/>
<dbReference type="PATRIC" id="fig|1411691.4.peg.1878"/>
<dbReference type="EchoBASE" id="EB0726"/>
<dbReference type="eggNOG" id="COG5002">
    <property type="taxonomic scope" value="Bacteria"/>
</dbReference>
<dbReference type="HOGENOM" id="CLU_000445_89_2_6"/>
<dbReference type="InParanoid" id="P08400"/>
<dbReference type="OMA" id="IRIRWWA"/>
<dbReference type="OrthoDB" id="9813151at2"/>
<dbReference type="PhylomeDB" id="P08400"/>
<dbReference type="BioCyc" id="EcoCyc:PHOR-MONOMER"/>
<dbReference type="BioCyc" id="MetaCyc:PHOR-MONOMER"/>
<dbReference type="BRENDA" id="2.7.13.3">
    <property type="organism ID" value="2026"/>
</dbReference>
<dbReference type="PRO" id="PR:P08400"/>
<dbReference type="Proteomes" id="UP000000625">
    <property type="component" value="Chromosome"/>
</dbReference>
<dbReference type="GO" id="GO:0005829">
    <property type="term" value="C:cytosol"/>
    <property type="evidence" value="ECO:0000314"/>
    <property type="project" value="EcoCyc"/>
</dbReference>
<dbReference type="GO" id="GO:0005886">
    <property type="term" value="C:plasma membrane"/>
    <property type="evidence" value="ECO:0000314"/>
    <property type="project" value="EcoCyc"/>
</dbReference>
<dbReference type="GO" id="GO:0005524">
    <property type="term" value="F:ATP binding"/>
    <property type="evidence" value="ECO:0007669"/>
    <property type="project" value="UniProtKB-KW"/>
</dbReference>
<dbReference type="GO" id="GO:0004721">
    <property type="term" value="F:phosphoprotein phosphatase activity"/>
    <property type="evidence" value="ECO:0000315"/>
    <property type="project" value="EcoCyc"/>
</dbReference>
<dbReference type="GO" id="GO:0000155">
    <property type="term" value="F:phosphorelay sensor kinase activity"/>
    <property type="evidence" value="ECO:0000314"/>
    <property type="project" value="EcoCyc"/>
</dbReference>
<dbReference type="GO" id="GO:0016036">
    <property type="term" value="P:cellular response to phosphate starvation"/>
    <property type="evidence" value="ECO:0000270"/>
    <property type="project" value="EcoCyc"/>
</dbReference>
<dbReference type="GO" id="GO:0006817">
    <property type="term" value="P:phosphate ion transport"/>
    <property type="evidence" value="ECO:0007669"/>
    <property type="project" value="UniProtKB-KW"/>
</dbReference>
<dbReference type="GO" id="GO:0006355">
    <property type="term" value="P:regulation of DNA-templated transcription"/>
    <property type="evidence" value="ECO:0007669"/>
    <property type="project" value="InterPro"/>
</dbReference>
<dbReference type="GO" id="GO:0007165">
    <property type="term" value="P:signal transduction"/>
    <property type="evidence" value="ECO:0000314"/>
    <property type="project" value="EcoCyc"/>
</dbReference>
<dbReference type="CDD" id="cd16952">
    <property type="entry name" value="HATPase_EcPhoR-like"/>
    <property type="match status" value="1"/>
</dbReference>
<dbReference type="CDD" id="cd00082">
    <property type="entry name" value="HisKA"/>
    <property type="match status" value="1"/>
</dbReference>
<dbReference type="CDD" id="cd00130">
    <property type="entry name" value="PAS"/>
    <property type="match status" value="1"/>
</dbReference>
<dbReference type="FunFam" id="3.30.450.20:FF:000044">
    <property type="entry name" value="Phosphate regulon sensor histidine kinase PhoR"/>
    <property type="match status" value="1"/>
</dbReference>
<dbReference type="FunFam" id="3.30.565.10:FF:000032">
    <property type="entry name" value="Phosphate regulon sensor histidine kinase PhoR"/>
    <property type="match status" value="1"/>
</dbReference>
<dbReference type="FunFam" id="1.10.287.130:FF:000001">
    <property type="entry name" value="Two-component sensor histidine kinase"/>
    <property type="match status" value="1"/>
</dbReference>
<dbReference type="Gene3D" id="1.10.287.130">
    <property type="match status" value="1"/>
</dbReference>
<dbReference type="Gene3D" id="3.30.565.10">
    <property type="entry name" value="Histidine kinase-like ATPase, C-terminal domain"/>
    <property type="match status" value="1"/>
</dbReference>
<dbReference type="Gene3D" id="3.30.450.20">
    <property type="entry name" value="PAS domain"/>
    <property type="match status" value="1"/>
</dbReference>
<dbReference type="InterPro" id="IPR050351">
    <property type="entry name" value="2-comp_sensor_kinase"/>
</dbReference>
<dbReference type="InterPro" id="IPR036890">
    <property type="entry name" value="HATPase_C_sf"/>
</dbReference>
<dbReference type="InterPro" id="IPR005467">
    <property type="entry name" value="His_kinase_dom"/>
</dbReference>
<dbReference type="InterPro" id="IPR003661">
    <property type="entry name" value="HisK_dim/P_dom"/>
</dbReference>
<dbReference type="InterPro" id="IPR036097">
    <property type="entry name" value="HisK_dim/P_sf"/>
</dbReference>
<dbReference type="InterPro" id="IPR000014">
    <property type="entry name" value="PAS"/>
</dbReference>
<dbReference type="InterPro" id="IPR035965">
    <property type="entry name" value="PAS-like_dom_sf"/>
</dbReference>
<dbReference type="InterPro" id="IPR013767">
    <property type="entry name" value="PAS_fold"/>
</dbReference>
<dbReference type="InterPro" id="IPR021766">
    <property type="entry name" value="PhoR"/>
</dbReference>
<dbReference type="InterPro" id="IPR004358">
    <property type="entry name" value="Sig_transdc_His_kin-like_C"/>
</dbReference>
<dbReference type="InterPro" id="IPR014310">
    <property type="entry name" value="Sig_transdc_His_kinase_PhoR"/>
</dbReference>
<dbReference type="NCBIfam" id="TIGR02966">
    <property type="entry name" value="phoR_proteo"/>
    <property type="match status" value="1"/>
</dbReference>
<dbReference type="NCBIfam" id="NF008235">
    <property type="entry name" value="PRK11006.1"/>
    <property type="match status" value="1"/>
</dbReference>
<dbReference type="PANTHER" id="PTHR45453">
    <property type="entry name" value="PHOSPHATE REGULON SENSOR PROTEIN PHOR"/>
    <property type="match status" value="1"/>
</dbReference>
<dbReference type="PANTHER" id="PTHR45453:SF1">
    <property type="entry name" value="PHOSPHATE REGULON SENSOR PROTEIN PHOR"/>
    <property type="match status" value="1"/>
</dbReference>
<dbReference type="Pfam" id="PF02518">
    <property type="entry name" value="HATPase_c"/>
    <property type="match status" value="1"/>
</dbReference>
<dbReference type="Pfam" id="PF00512">
    <property type="entry name" value="HisKA"/>
    <property type="match status" value="1"/>
</dbReference>
<dbReference type="Pfam" id="PF00989">
    <property type="entry name" value="PAS"/>
    <property type="match status" value="1"/>
</dbReference>
<dbReference type="Pfam" id="PF11808">
    <property type="entry name" value="PhoR"/>
    <property type="match status" value="1"/>
</dbReference>
<dbReference type="PRINTS" id="PR00344">
    <property type="entry name" value="BCTRLSENSOR"/>
</dbReference>
<dbReference type="SMART" id="SM00387">
    <property type="entry name" value="HATPase_c"/>
    <property type="match status" value="1"/>
</dbReference>
<dbReference type="SMART" id="SM00388">
    <property type="entry name" value="HisKA"/>
    <property type="match status" value="1"/>
</dbReference>
<dbReference type="SMART" id="SM00091">
    <property type="entry name" value="PAS"/>
    <property type="match status" value="1"/>
</dbReference>
<dbReference type="SUPFAM" id="SSF55874">
    <property type="entry name" value="ATPase domain of HSP90 chaperone/DNA topoisomerase II/histidine kinase"/>
    <property type="match status" value="1"/>
</dbReference>
<dbReference type="SUPFAM" id="SSF47384">
    <property type="entry name" value="Homodimeric domain of signal transducing histidine kinase"/>
    <property type="match status" value="1"/>
</dbReference>
<dbReference type="SUPFAM" id="SSF55785">
    <property type="entry name" value="PYP-like sensor domain (PAS domain)"/>
    <property type="match status" value="1"/>
</dbReference>
<dbReference type="PROSITE" id="PS50109">
    <property type="entry name" value="HIS_KIN"/>
    <property type="match status" value="1"/>
</dbReference>
<dbReference type="PROSITE" id="PS50112">
    <property type="entry name" value="PAS"/>
    <property type="match status" value="1"/>
</dbReference>
<organism>
    <name type="scientific">Escherichia coli (strain K12)</name>
    <dbReference type="NCBI Taxonomy" id="83333"/>
    <lineage>
        <taxon>Bacteria</taxon>
        <taxon>Pseudomonadati</taxon>
        <taxon>Pseudomonadota</taxon>
        <taxon>Gammaproteobacteria</taxon>
        <taxon>Enterobacterales</taxon>
        <taxon>Enterobacteriaceae</taxon>
        <taxon>Escherichia</taxon>
    </lineage>
</organism>